<accession>B7LAR4</accession>
<feature type="chain" id="PRO_1000124983" description="CinA-like protein">
    <location>
        <begin position="1"/>
        <end position="400"/>
    </location>
</feature>
<proteinExistence type="inferred from homology"/>
<organism>
    <name type="scientific">Escherichia coli (strain 55989 / EAEC)</name>
    <dbReference type="NCBI Taxonomy" id="585055"/>
    <lineage>
        <taxon>Bacteria</taxon>
        <taxon>Pseudomonadati</taxon>
        <taxon>Pseudomonadota</taxon>
        <taxon>Gammaproteobacteria</taxon>
        <taxon>Enterobacterales</taxon>
        <taxon>Enterobacteriaceae</taxon>
        <taxon>Escherichia</taxon>
    </lineage>
</organism>
<dbReference type="EMBL" id="CU928145">
    <property type="protein sequence ID" value="CAU98364.1"/>
    <property type="molecule type" value="Genomic_DNA"/>
</dbReference>
<dbReference type="RefSeq" id="WP_000921619.1">
    <property type="nucleotide sequence ID" value="NC_011748.1"/>
</dbReference>
<dbReference type="SMR" id="B7LAR4"/>
<dbReference type="KEGG" id="eck:EC55989_2495"/>
<dbReference type="HOGENOM" id="CLU_030805_9_1_6"/>
<dbReference type="Proteomes" id="UP000000746">
    <property type="component" value="Chromosome"/>
</dbReference>
<dbReference type="CDD" id="cd00885">
    <property type="entry name" value="cinA"/>
    <property type="match status" value="1"/>
</dbReference>
<dbReference type="Gene3D" id="3.40.980.10">
    <property type="entry name" value="MoaB/Mog-like domain"/>
    <property type="match status" value="1"/>
</dbReference>
<dbReference type="HAMAP" id="MF_00226_B">
    <property type="entry name" value="CinA_B"/>
    <property type="match status" value="1"/>
</dbReference>
<dbReference type="InterPro" id="IPR050101">
    <property type="entry name" value="CinA"/>
</dbReference>
<dbReference type="InterPro" id="IPR036653">
    <property type="entry name" value="CinA-like_C"/>
</dbReference>
<dbReference type="InterPro" id="IPR008135">
    <property type="entry name" value="Competence-induced_CinA"/>
</dbReference>
<dbReference type="InterPro" id="IPR036425">
    <property type="entry name" value="MoaB/Mog-like_dom_sf"/>
</dbReference>
<dbReference type="InterPro" id="IPR001453">
    <property type="entry name" value="MoaB/Mog_dom"/>
</dbReference>
<dbReference type="NCBIfam" id="TIGR00200">
    <property type="entry name" value="cinA_nterm"/>
    <property type="match status" value="1"/>
</dbReference>
<dbReference type="NCBIfam" id="TIGR00177">
    <property type="entry name" value="molyb_syn"/>
    <property type="match status" value="1"/>
</dbReference>
<dbReference type="NCBIfam" id="NF002978">
    <property type="entry name" value="PRK03673.1"/>
    <property type="match status" value="1"/>
</dbReference>
<dbReference type="PANTHER" id="PTHR13939">
    <property type="entry name" value="NICOTINAMIDE-NUCLEOTIDE AMIDOHYDROLASE PNCC"/>
    <property type="match status" value="1"/>
</dbReference>
<dbReference type="PANTHER" id="PTHR13939:SF0">
    <property type="entry name" value="NMN AMIDOHYDROLASE-LIKE PROTEIN YFAY"/>
    <property type="match status" value="1"/>
</dbReference>
<dbReference type="Pfam" id="PF00994">
    <property type="entry name" value="MoCF_biosynth"/>
    <property type="match status" value="1"/>
</dbReference>
<dbReference type="PIRSF" id="PIRSF006728">
    <property type="entry name" value="CinA"/>
    <property type="match status" value="1"/>
</dbReference>
<dbReference type="SMART" id="SM00852">
    <property type="entry name" value="MoCF_biosynth"/>
    <property type="match status" value="1"/>
</dbReference>
<dbReference type="SUPFAM" id="SSF142433">
    <property type="entry name" value="CinA-like"/>
    <property type="match status" value="1"/>
</dbReference>
<dbReference type="SUPFAM" id="SSF53218">
    <property type="entry name" value="Molybdenum cofactor biosynthesis proteins"/>
    <property type="match status" value="1"/>
</dbReference>
<comment type="similarity">
    <text evidence="1">Belongs to the CinA family.</text>
</comment>
<keyword id="KW-1185">Reference proteome</keyword>
<evidence type="ECO:0000255" key="1">
    <source>
        <dbReference type="HAMAP-Rule" id="MF_00226"/>
    </source>
</evidence>
<gene>
    <name type="ordered locus">EC55989_2495</name>
</gene>
<name>CINAL_ECO55</name>
<sequence length="400" mass="44240">MLKVEMLSTGDEVLHGQIVDTNAAWLADFFFHQGLPLSRRNTVGDNLDDLVTILRERSQHADVLIVNGGLGPTSDDLSALAAATAKGEGLVLHEAWLKEMERYFHERGRVMAPSNRKQAELPASAEFINNPVGTACGFAVQLNRCLMFFTPGVPSEFKVMVEHEILPRLRERFSLPQPPVCLRLTTFGRSESDLAQSLDTLQLPPGVTMGYRSSMPIIELKLTGPASEQQAMEKLWLDVKRVAGQSVIFEGTEGLPAQISRELQNRQFSLTLSEQFTGGLLALQLSRAGAPLLACEVVPSQEETLAQTAHWITERRANHFAGLALAVSGFENEHLNFALATPDGTFALRVRFSTTRYSLAIRQEVCAMMALNMLRRWLNGQDIASEHGWIEVIESMTLSV</sequence>
<protein>
    <recommendedName>
        <fullName evidence="1">CinA-like protein</fullName>
    </recommendedName>
</protein>
<reference key="1">
    <citation type="journal article" date="2009" name="PLoS Genet.">
        <title>Organised genome dynamics in the Escherichia coli species results in highly diverse adaptive paths.</title>
        <authorList>
            <person name="Touchon M."/>
            <person name="Hoede C."/>
            <person name="Tenaillon O."/>
            <person name="Barbe V."/>
            <person name="Baeriswyl S."/>
            <person name="Bidet P."/>
            <person name="Bingen E."/>
            <person name="Bonacorsi S."/>
            <person name="Bouchier C."/>
            <person name="Bouvet O."/>
            <person name="Calteau A."/>
            <person name="Chiapello H."/>
            <person name="Clermont O."/>
            <person name="Cruveiller S."/>
            <person name="Danchin A."/>
            <person name="Diard M."/>
            <person name="Dossat C."/>
            <person name="Karoui M.E."/>
            <person name="Frapy E."/>
            <person name="Garry L."/>
            <person name="Ghigo J.M."/>
            <person name="Gilles A.M."/>
            <person name="Johnson J."/>
            <person name="Le Bouguenec C."/>
            <person name="Lescat M."/>
            <person name="Mangenot S."/>
            <person name="Martinez-Jehanne V."/>
            <person name="Matic I."/>
            <person name="Nassif X."/>
            <person name="Oztas S."/>
            <person name="Petit M.A."/>
            <person name="Pichon C."/>
            <person name="Rouy Z."/>
            <person name="Ruf C.S."/>
            <person name="Schneider D."/>
            <person name="Tourret J."/>
            <person name="Vacherie B."/>
            <person name="Vallenet D."/>
            <person name="Medigue C."/>
            <person name="Rocha E.P.C."/>
            <person name="Denamur E."/>
        </authorList>
    </citation>
    <scope>NUCLEOTIDE SEQUENCE [LARGE SCALE GENOMIC DNA]</scope>
    <source>
        <strain>55989 / EAEC</strain>
    </source>
</reference>